<feature type="signal peptide" evidence="1">
    <location>
        <begin position="1"/>
        <end position="17"/>
    </location>
</feature>
<feature type="peptide" id="PRO_0000444897" description="Ampulexin 3" evidence="1">
    <location>
        <begin position="18"/>
        <end position="30"/>
    </location>
</feature>
<comment type="subunit">
    <text evidence="1">Monomer.</text>
</comment>
<comment type="subcellular location">
    <subcellularLocation>
        <location evidence="1">Secreted</location>
    </subcellularLocation>
</comment>
<comment type="tissue specificity">
    <text evidence="1">Expressed in venom sac and, to a lesser extent, in venom gland. Not expressed in brain.</text>
</comment>
<comment type="mass spectrometry" mass="1566.0" method="MALDI" evidence="1"/>
<accession>A0A1W6EVN4</accession>
<dbReference type="EMBL" id="MF804416">
    <property type="protein sequence ID" value="AUX80733.1"/>
    <property type="molecule type" value="mRNA"/>
</dbReference>
<dbReference type="EMBL" id="KY563375">
    <property type="protein sequence ID" value="ARK19784.1"/>
    <property type="molecule type" value="mRNA"/>
</dbReference>
<dbReference type="GO" id="GO:0005576">
    <property type="term" value="C:extracellular region"/>
    <property type="evidence" value="ECO:0007669"/>
    <property type="project" value="UniProtKB-SubCell"/>
</dbReference>
<reference evidence="3" key="1">
    <citation type="journal article" date="2018" name="Biochemistry">
        <title>Ampulexins: A New Family of Peptides in Venom of the Emerald Jewel Wasp, Ampulex compressa.</title>
        <authorList>
            <person name="Moore E.L."/>
            <person name="Arvidson R."/>
            <person name="Banks C."/>
            <person name="Urenda J.P."/>
            <person name="Duong E."/>
            <person name="Mohammed H."/>
            <person name="Adams M.E."/>
        </authorList>
    </citation>
    <scope>NUCLEOTIDE SEQUENCE [MRNA]</scope>
    <scope>PROTEIN SEQUENCE OF 18-30</scope>
    <scope>SUBCELLULAR LOCATION</scope>
    <scope>TISSUE SPECIFICITY</scope>
    <scope>MASS SPECTROMETRY</scope>
    <scope>SUBUNIT</scope>
    <source>
        <tissue evidence="2">Venom</tissue>
        <tissue evidence="2">Venom gland</tissue>
    </source>
</reference>
<reference evidence="5" key="2">
    <citation type="submission" date="2017-09" db="EMBL/GenBank/DDBJ databases">
        <authorList>
            <person name="Ehlers B."/>
            <person name="Leendertz F.H."/>
        </authorList>
    </citation>
    <scope>NUCLEOTIDE SEQUENCE [MRNA]</scope>
</reference>
<proteinExistence type="evidence at protein level"/>
<evidence type="ECO:0000269" key="1">
    <source>
    </source>
</evidence>
<evidence type="ECO:0000303" key="2">
    <source>
    </source>
</evidence>
<evidence type="ECO:0000305" key="3"/>
<evidence type="ECO:0000312" key="4">
    <source>
        <dbReference type="EMBL" id="ARK19784.1"/>
    </source>
</evidence>
<evidence type="ECO:0000312" key="5">
    <source>
        <dbReference type="EMBL" id="AUX80733.1"/>
    </source>
</evidence>
<protein>
    <recommendedName>
        <fullName evidence="2">Ampulexin 3</fullName>
        <shortName evidence="2">Axn3</shortName>
    </recommendedName>
</protein>
<sequence length="30" mass="3492">MKAIMVLFYVMTLTIIGSFSMLLQKAKERQ</sequence>
<keyword id="KW-0903">Direct protein sequencing</keyword>
<keyword id="KW-0964">Secreted</keyword>
<keyword id="KW-0732">Signal</keyword>
<name>AMPU3_AMPCP</name>
<organism evidence="4">
    <name type="scientific">Ampulex compressa</name>
    <name type="common">Emerald cockroach wasp</name>
    <dbReference type="NCBI Taxonomy" id="860918"/>
    <lineage>
        <taxon>Eukaryota</taxon>
        <taxon>Metazoa</taxon>
        <taxon>Ecdysozoa</taxon>
        <taxon>Arthropoda</taxon>
        <taxon>Hexapoda</taxon>
        <taxon>Insecta</taxon>
        <taxon>Pterygota</taxon>
        <taxon>Neoptera</taxon>
        <taxon>Endopterygota</taxon>
        <taxon>Hymenoptera</taxon>
        <taxon>Apocrita</taxon>
        <taxon>Aculeata</taxon>
        <taxon>Apoidea</taxon>
        <taxon>Ampulicidae</taxon>
        <taxon>Ampulicini</taxon>
        <taxon>Ampulex</taxon>
    </lineage>
</organism>